<evidence type="ECO:0000255" key="1">
    <source>
        <dbReference type="HAMAP-Rule" id="MF_01358"/>
    </source>
</evidence>
<dbReference type="EC" id="7.1.1.-" evidence="1"/>
<dbReference type="EMBL" id="AP007255">
    <property type="protein sequence ID" value="BAE51588.1"/>
    <property type="molecule type" value="Genomic_DNA"/>
</dbReference>
<dbReference type="RefSeq" id="WP_011385162.1">
    <property type="nucleotide sequence ID" value="NC_007626.1"/>
</dbReference>
<dbReference type="SMR" id="Q2W3I7"/>
<dbReference type="STRING" id="342108.amb2784"/>
<dbReference type="KEGG" id="mag:amb2784"/>
<dbReference type="HOGENOM" id="CLU_015134_1_1_5"/>
<dbReference type="OrthoDB" id="9801496at2"/>
<dbReference type="Proteomes" id="UP000007058">
    <property type="component" value="Chromosome"/>
</dbReference>
<dbReference type="GO" id="GO:0005886">
    <property type="term" value="C:plasma membrane"/>
    <property type="evidence" value="ECO:0007669"/>
    <property type="project" value="UniProtKB-SubCell"/>
</dbReference>
<dbReference type="GO" id="GO:0051287">
    <property type="term" value="F:NAD binding"/>
    <property type="evidence" value="ECO:0007669"/>
    <property type="project" value="InterPro"/>
</dbReference>
<dbReference type="GO" id="GO:0050136">
    <property type="term" value="F:NADH:ubiquinone reductase (non-electrogenic) activity"/>
    <property type="evidence" value="ECO:0007669"/>
    <property type="project" value="UniProtKB-UniRule"/>
</dbReference>
<dbReference type="GO" id="GO:0048038">
    <property type="term" value="F:quinone binding"/>
    <property type="evidence" value="ECO:0007669"/>
    <property type="project" value="UniProtKB-KW"/>
</dbReference>
<dbReference type="FunFam" id="1.10.645.10:FF:000005">
    <property type="entry name" value="NADH-quinone oxidoreductase subunit D"/>
    <property type="match status" value="1"/>
</dbReference>
<dbReference type="Gene3D" id="1.10.645.10">
    <property type="entry name" value="Cytochrome-c3 Hydrogenase, chain B"/>
    <property type="match status" value="1"/>
</dbReference>
<dbReference type="HAMAP" id="MF_01358">
    <property type="entry name" value="NDH1_NuoD"/>
    <property type="match status" value="1"/>
</dbReference>
<dbReference type="InterPro" id="IPR001135">
    <property type="entry name" value="NADH_Q_OxRdtase_suD"/>
</dbReference>
<dbReference type="InterPro" id="IPR014029">
    <property type="entry name" value="NADH_UbQ_OxRdtase_49kDa_CS"/>
</dbReference>
<dbReference type="InterPro" id="IPR022885">
    <property type="entry name" value="NDH1_su_D/H"/>
</dbReference>
<dbReference type="InterPro" id="IPR029014">
    <property type="entry name" value="NiFe-Hase_large"/>
</dbReference>
<dbReference type="NCBIfam" id="TIGR01962">
    <property type="entry name" value="NuoD"/>
    <property type="match status" value="1"/>
</dbReference>
<dbReference type="NCBIfam" id="NF004739">
    <property type="entry name" value="PRK06075.1"/>
    <property type="match status" value="1"/>
</dbReference>
<dbReference type="PANTHER" id="PTHR11993:SF10">
    <property type="entry name" value="NADH DEHYDROGENASE [UBIQUINONE] IRON-SULFUR PROTEIN 2, MITOCHONDRIAL"/>
    <property type="match status" value="1"/>
</dbReference>
<dbReference type="PANTHER" id="PTHR11993">
    <property type="entry name" value="NADH-UBIQUINONE OXIDOREDUCTASE 49 KDA SUBUNIT"/>
    <property type="match status" value="1"/>
</dbReference>
<dbReference type="Pfam" id="PF00346">
    <property type="entry name" value="Complex1_49kDa"/>
    <property type="match status" value="1"/>
</dbReference>
<dbReference type="SUPFAM" id="SSF56762">
    <property type="entry name" value="HydB/Nqo4-like"/>
    <property type="match status" value="1"/>
</dbReference>
<dbReference type="PROSITE" id="PS00535">
    <property type="entry name" value="COMPLEX1_49K"/>
    <property type="match status" value="1"/>
</dbReference>
<reference key="1">
    <citation type="journal article" date="2005" name="DNA Res.">
        <title>Complete genome sequence of the facultative anaerobic magnetotactic bacterium Magnetospirillum sp. strain AMB-1.</title>
        <authorList>
            <person name="Matsunaga T."/>
            <person name="Okamura Y."/>
            <person name="Fukuda Y."/>
            <person name="Wahyudi A.T."/>
            <person name="Murase Y."/>
            <person name="Takeyama H."/>
        </authorList>
    </citation>
    <scope>NUCLEOTIDE SEQUENCE [LARGE SCALE GENOMIC DNA]</scope>
    <source>
        <strain>ATCC 700264 / AMB-1</strain>
    </source>
</reference>
<gene>
    <name evidence="1" type="primary">nuoD</name>
    <name type="ordered locus">amb2784</name>
</gene>
<comment type="function">
    <text evidence="1">NDH-1 shuttles electrons from NADH, via FMN and iron-sulfur (Fe-S) centers, to quinones in the respiratory chain. The immediate electron acceptor for the enzyme in this species is believed to be ubiquinone. Couples the redox reaction to proton translocation (for every two electrons transferred, four hydrogen ions are translocated across the cytoplasmic membrane), and thus conserves the redox energy in a proton gradient.</text>
</comment>
<comment type="catalytic activity">
    <reaction evidence="1">
        <text>a quinone + NADH + 5 H(+)(in) = a quinol + NAD(+) + 4 H(+)(out)</text>
        <dbReference type="Rhea" id="RHEA:57888"/>
        <dbReference type="ChEBI" id="CHEBI:15378"/>
        <dbReference type="ChEBI" id="CHEBI:24646"/>
        <dbReference type="ChEBI" id="CHEBI:57540"/>
        <dbReference type="ChEBI" id="CHEBI:57945"/>
        <dbReference type="ChEBI" id="CHEBI:132124"/>
    </reaction>
</comment>
<comment type="subunit">
    <text evidence="1">NDH-1 is composed of 14 different subunits. Subunits NuoB, C, D, E, F, and G constitute the peripheral sector of the complex.</text>
</comment>
<comment type="subcellular location">
    <subcellularLocation>
        <location evidence="1">Cell inner membrane</location>
        <topology evidence="1">Peripheral membrane protein</topology>
        <orientation evidence="1">Cytoplasmic side</orientation>
    </subcellularLocation>
</comment>
<comment type="similarity">
    <text evidence="1">Belongs to the complex I 49 kDa subunit family.</text>
</comment>
<accession>Q2W3I7</accession>
<organism>
    <name type="scientific">Paramagnetospirillum magneticum (strain ATCC 700264 / AMB-1)</name>
    <name type="common">Magnetospirillum magneticum</name>
    <dbReference type="NCBI Taxonomy" id="342108"/>
    <lineage>
        <taxon>Bacteria</taxon>
        <taxon>Pseudomonadati</taxon>
        <taxon>Pseudomonadota</taxon>
        <taxon>Alphaproteobacteria</taxon>
        <taxon>Rhodospirillales</taxon>
        <taxon>Magnetospirillaceae</taxon>
        <taxon>Paramagnetospirillum</taxon>
    </lineage>
</organism>
<keyword id="KW-0997">Cell inner membrane</keyword>
<keyword id="KW-1003">Cell membrane</keyword>
<keyword id="KW-0472">Membrane</keyword>
<keyword id="KW-0520">NAD</keyword>
<keyword id="KW-0874">Quinone</keyword>
<keyword id="KW-1278">Translocase</keyword>
<keyword id="KW-0813">Transport</keyword>
<keyword id="KW-0830">Ubiquinone</keyword>
<name>NUOD_PARM1</name>
<protein>
    <recommendedName>
        <fullName evidence="1">NADH-quinone oxidoreductase subunit D</fullName>
        <ecNumber evidence="1">7.1.1.-</ecNumber>
    </recommendedName>
    <alternativeName>
        <fullName evidence="1">NADH dehydrogenase I subunit D</fullName>
    </alternativeName>
    <alternativeName>
        <fullName evidence="1">NDH-1 subunit D</fullName>
    </alternativeName>
</protein>
<proteinExistence type="inferred from homology"/>
<sequence>MAESQIQSYTINFGPQHPAAHGVLRLILEMSGEVVDRADPHVGLLHRGTEKLIEHKTYLQATPYFDRLDYVGTMNQEHAFVLATEKLLGIDIPIRAKFIRTLYDEIGRILNHLLNVTAFIFDVGGMTPLLYGFEEREKLMEFYERVCGARLHANYYRPGGVAADLPAGLLEDIAAWCETFPKVLDDIETLATDNRIFKQRVVDIGVVSPEQALDWGFTGPNLRASGIAWDLRKSQPYDVYDQMEFDIPVGKNGDGYDRYLVRVLEMRESVKIMKQCIAKMPGGPVRVEDNKITPPKRSEMKTSMESLIHHFKLFTEGFKVPAGEVYGAIEAPKGEFAVYLVSDGTGKPYRCKIRPPGYVHLQALDMMSKGHMLADVVANIGSIDIVFGEIDR</sequence>
<feature type="chain" id="PRO_0000357842" description="NADH-quinone oxidoreductase subunit D">
    <location>
        <begin position="1"/>
        <end position="392"/>
    </location>
</feature>